<proteinExistence type="inferred from homology"/>
<accession>B5EYS8</accession>
<reference key="1">
    <citation type="journal article" date="2011" name="J. Bacteriol.">
        <title>Comparative genomics of 28 Salmonella enterica isolates: evidence for CRISPR-mediated adaptive sublineage evolution.</title>
        <authorList>
            <person name="Fricke W.F."/>
            <person name="Mammel M.K."/>
            <person name="McDermott P.F."/>
            <person name="Tartera C."/>
            <person name="White D.G."/>
            <person name="Leclerc J.E."/>
            <person name="Ravel J."/>
            <person name="Cebula T.A."/>
        </authorList>
    </citation>
    <scope>NUCLEOTIDE SEQUENCE [LARGE SCALE GENOMIC DNA]</scope>
    <source>
        <strain>SL483</strain>
    </source>
</reference>
<dbReference type="EMBL" id="CP001138">
    <property type="protein sequence ID" value="ACH49131.1"/>
    <property type="molecule type" value="Genomic_DNA"/>
</dbReference>
<dbReference type="RefSeq" id="WP_000050806.1">
    <property type="nucleotide sequence ID" value="NC_011149.1"/>
</dbReference>
<dbReference type="SMR" id="B5EYS8"/>
<dbReference type="KEGG" id="sea:SeAg_B2375"/>
<dbReference type="HOGENOM" id="CLU_063050_0_1_6"/>
<dbReference type="Proteomes" id="UP000008819">
    <property type="component" value="Chromosome"/>
</dbReference>
<dbReference type="GO" id="GO:0043590">
    <property type="term" value="C:bacterial nucleoid"/>
    <property type="evidence" value="ECO:0007669"/>
    <property type="project" value="TreeGrafter"/>
</dbReference>
<dbReference type="GO" id="GO:0005737">
    <property type="term" value="C:cytoplasm"/>
    <property type="evidence" value="ECO:0007669"/>
    <property type="project" value="UniProtKB-UniRule"/>
</dbReference>
<dbReference type="GO" id="GO:0003690">
    <property type="term" value="F:double-stranded DNA binding"/>
    <property type="evidence" value="ECO:0007669"/>
    <property type="project" value="TreeGrafter"/>
</dbReference>
<dbReference type="GO" id="GO:0003727">
    <property type="term" value="F:single-stranded RNA binding"/>
    <property type="evidence" value="ECO:0007669"/>
    <property type="project" value="TreeGrafter"/>
</dbReference>
<dbReference type="HAMAP" id="MF_00730">
    <property type="entry name" value="NdpA"/>
    <property type="match status" value="1"/>
</dbReference>
<dbReference type="InterPro" id="IPR007358">
    <property type="entry name" value="Nucleoid_associated_NdpA"/>
</dbReference>
<dbReference type="NCBIfam" id="NF001557">
    <property type="entry name" value="PRK00378.1"/>
    <property type="match status" value="1"/>
</dbReference>
<dbReference type="PANTHER" id="PTHR38772">
    <property type="match status" value="1"/>
</dbReference>
<dbReference type="PANTHER" id="PTHR38772:SF1">
    <property type="entry name" value="NUCLEOID-ASSOCIATED PROTEIN YEJK"/>
    <property type="match status" value="1"/>
</dbReference>
<dbReference type="Pfam" id="PF04245">
    <property type="entry name" value="NA37"/>
    <property type="match status" value="1"/>
</dbReference>
<gene>
    <name evidence="1" type="primary">yejK</name>
    <name type="ordered locus">SeAg_B2375</name>
</gene>
<evidence type="ECO:0000255" key="1">
    <source>
        <dbReference type="HAMAP-Rule" id="MF_00730"/>
    </source>
</evidence>
<organism>
    <name type="scientific">Salmonella agona (strain SL483)</name>
    <dbReference type="NCBI Taxonomy" id="454166"/>
    <lineage>
        <taxon>Bacteria</taxon>
        <taxon>Pseudomonadati</taxon>
        <taxon>Pseudomonadota</taxon>
        <taxon>Gammaproteobacteria</taxon>
        <taxon>Enterobacterales</taxon>
        <taxon>Enterobacteriaceae</taxon>
        <taxon>Salmonella</taxon>
    </lineage>
</organism>
<comment type="subcellular location">
    <subcellularLocation>
        <location evidence="1">Cytoplasm</location>
        <location evidence="1">Nucleoid</location>
    </subcellularLocation>
</comment>
<comment type="similarity">
    <text evidence="1">Belongs to the YejK family.</text>
</comment>
<feature type="chain" id="PRO_1000132727" description="Nucleoid-associated protein SeAg_B2375">
    <location>
        <begin position="1"/>
        <end position="335"/>
    </location>
</feature>
<keyword id="KW-0963">Cytoplasm</keyword>
<sequence length="335" mass="37877">MSLDINQIALHQLIKRDEQNLELVLRDSLLEPTTTVVEMVAELHRVYSAKNKAYGLFNEESELAQALRLQRQGEEDFLAFSRAATGRLRDELAKYPFADGGIVLFCHYRYLAVEYLLVTVLNNLSSMRVNENLDINPTHYLDINHADIVARIDLTEWETNPQSTRYLTFLKGRVGRKVADFFMDFLGASEGLNAKAQNRGLLQAVDDFTAEAQLDKAERQNVRQQVYSYCNEQLQAGEEIELESLSKELSGVSEVSFSEFTAEKGYELEESFPADRSTLRQLTKYAGSGGGLTINFDAMLLGERIFWDPATDTLTIKGTPPNLRDQLQRRTSGGK</sequence>
<name>NDPA_SALA4</name>
<protein>
    <recommendedName>
        <fullName evidence="1">Nucleoid-associated protein SeAg_B2375</fullName>
    </recommendedName>
</protein>